<feature type="transit peptide" description="Mitochondrion" evidence="5">
    <location>
        <begin position="1"/>
        <end position="37"/>
    </location>
</feature>
<feature type="chain" id="PRO_0000013484" description="Hydroxymethylglutaryl-CoA synthase, mitochondrial">
    <location>
        <begin position="38"/>
        <end position="508"/>
    </location>
</feature>
<feature type="active site" description="Proton donor/acceptor" evidence="3">
    <location>
        <position position="132"/>
    </location>
</feature>
<feature type="active site" description="Acyl-thioester intermediate" evidence="3">
    <location>
        <position position="166"/>
    </location>
</feature>
<feature type="active site" description="Proton donor/acceptor" evidence="3">
    <location>
        <position position="301"/>
    </location>
</feature>
<feature type="binding site" evidence="2">
    <location>
        <position position="80"/>
    </location>
    <ligand>
        <name>(3S)-3-hydroxy-3-methylglutaryl-CoA</name>
        <dbReference type="ChEBI" id="CHEBI:43074"/>
    </ligand>
</feature>
<feature type="binding site" evidence="2">
    <location>
        <position position="81"/>
    </location>
    <ligand>
        <name>(3S)-3-hydroxy-3-methylglutaryl-CoA</name>
        <dbReference type="ChEBI" id="CHEBI:43074"/>
    </ligand>
</feature>
<feature type="binding site" evidence="2">
    <location>
        <position position="166"/>
    </location>
    <ligand>
        <name>(3S)-3-hydroxy-3-methylglutaryl-CoA</name>
        <dbReference type="ChEBI" id="CHEBI:43074"/>
    </ligand>
</feature>
<feature type="binding site" evidence="2">
    <location>
        <position position="204"/>
    </location>
    <ligand>
        <name>(3S)-3-hydroxy-3-methylglutaryl-CoA</name>
        <dbReference type="ChEBI" id="CHEBI:43074"/>
    </ligand>
</feature>
<feature type="binding site" evidence="2">
    <location>
        <position position="208"/>
    </location>
    <ligand>
        <name>(3S)-3-hydroxy-3-methylglutaryl-CoA</name>
        <dbReference type="ChEBI" id="CHEBI:43074"/>
    </ligand>
</feature>
<feature type="binding site" evidence="2">
    <location>
        <position position="258"/>
    </location>
    <ligand>
        <name>(3S)-3-hydroxy-3-methylglutaryl-CoA</name>
        <dbReference type="ChEBI" id="CHEBI:43074"/>
    </ligand>
</feature>
<feature type="binding site" evidence="2">
    <location>
        <position position="301"/>
    </location>
    <ligand>
        <name>(3S)-3-hydroxy-3-methylglutaryl-CoA</name>
        <dbReference type="ChEBI" id="CHEBI:43074"/>
    </ligand>
</feature>
<feature type="binding site" evidence="2">
    <location>
        <position position="310"/>
    </location>
    <ligand>
        <name>(3S)-3-hydroxy-3-methylglutaryl-CoA</name>
        <dbReference type="ChEBI" id="CHEBI:43074"/>
    </ligand>
</feature>
<feature type="binding site" evidence="2">
    <location>
        <position position="380"/>
    </location>
    <ligand>
        <name>(3S)-3-hydroxy-3-methylglutaryl-CoA</name>
        <dbReference type="ChEBI" id="CHEBI:43074"/>
    </ligand>
</feature>
<feature type="binding site" evidence="2">
    <location>
        <position position="414"/>
    </location>
    <ligand>
        <name>(3S)-3-hydroxy-3-methylglutaryl-CoA</name>
        <dbReference type="ChEBI" id="CHEBI:43074"/>
    </ligand>
</feature>
<feature type="modified residue" description="N6-succinyllysine" evidence="10">
    <location>
        <position position="52"/>
    </location>
</feature>
<feature type="modified residue" description="N6-acetyllysine; alternate" evidence="9">
    <location>
        <position position="83"/>
    </location>
</feature>
<feature type="modified residue" description="N6-succinyllysine; alternate" evidence="4 10">
    <location>
        <position position="83"/>
    </location>
</feature>
<feature type="modified residue" description="N6-acetyllysine; alternate" evidence="9">
    <location>
        <position position="118"/>
    </location>
</feature>
<feature type="modified residue" description="N6-succinyllysine; alternate" evidence="10">
    <location>
        <position position="118"/>
    </location>
</feature>
<feature type="modified residue" description="N6-succinyllysine" evidence="10">
    <location>
        <position position="221"/>
    </location>
</feature>
<feature type="modified residue" description="N6-acetyllysine" evidence="9">
    <location>
        <position position="243"/>
    </location>
</feature>
<feature type="modified residue" description="N6-acetyllysine; alternate" evidence="9">
    <location>
        <position position="256"/>
    </location>
</feature>
<feature type="modified residue" description="N6-succinyllysine; alternate" evidence="10">
    <location>
        <position position="256"/>
    </location>
</feature>
<feature type="modified residue" description="N6-acetyllysine" evidence="9">
    <location>
        <position position="306"/>
    </location>
</feature>
<feature type="modified residue" description="N6-acetyllysine; alternate" evidence="9">
    <location>
        <position position="310"/>
    </location>
</feature>
<feature type="modified residue" description="N6-succinyllysine; alternate" evidence="4 10">
    <location>
        <position position="310"/>
    </location>
</feature>
<feature type="modified residue" description="N6-acetyllysine; alternate" evidence="9">
    <location>
        <position position="327"/>
    </location>
</feature>
<feature type="modified residue" description="N6-succinyllysine; alternate" evidence="10">
    <location>
        <position position="327"/>
    </location>
</feature>
<feature type="modified residue" description="N6-succinyllysine" evidence="10">
    <location>
        <position position="333"/>
    </location>
</feature>
<feature type="modified residue" description="N6-acetyllysine; alternate" evidence="9">
    <location>
        <position position="342"/>
    </location>
</feature>
<feature type="modified residue" description="N6-succinyllysine; alternate" evidence="10">
    <location>
        <position position="342"/>
    </location>
</feature>
<feature type="modified residue" description="N6-acetyllysine; alternate" evidence="9">
    <location>
        <position position="350"/>
    </location>
</feature>
<feature type="modified residue" description="N6-succinyllysine; alternate" evidence="10">
    <location>
        <position position="350"/>
    </location>
</feature>
<feature type="modified residue" description="N6-acetyllysine; alternate" evidence="9">
    <location>
        <position position="354"/>
    </location>
</feature>
<feature type="modified residue" description="N6-succinyllysine; alternate" evidence="4 10">
    <location>
        <position position="354"/>
    </location>
</feature>
<feature type="modified residue" description="N6-acetyllysine; alternate" evidence="9">
    <location>
        <position position="358"/>
    </location>
</feature>
<feature type="modified residue" description="N6-succinyllysine; alternate" evidence="4 10">
    <location>
        <position position="358"/>
    </location>
</feature>
<feature type="modified residue" description="N6-acetyllysine" evidence="9">
    <location>
        <position position="427"/>
    </location>
</feature>
<feature type="modified residue" description="Phosphoserine" evidence="7">
    <location>
        <position position="433"/>
    </location>
</feature>
<feature type="modified residue" description="N6-acetyllysine" evidence="9">
    <location>
        <position position="437"/>
    </location>
</feature>
<feature type="modified residue" description="Phosphoserine" evidence="2">
    <location>
        <position position="440"/>
    </location>
</feature>
<feature type="modified residue" description="N6-acetyllysine; alternate" evidence="9">
    <location>
        <position position="447"/>
    </location>
</feature>
<feature type="modified residue" description="N6-succinyllysine; alternate" evidence="10">
    <location>
        <position position="447"/>
    </location>
</feature>
<feature type="modified residue" description="Phosphoserine" evidence="8">
    <location>
        <position position="456"/>
    </location>
</feature>
<feature type="modified residue" description="N6-acetyllysine; alternate" evidence="9">
    <location>
        <position position="473"/>
    </location>
</feature>
<feature type="modified residue" description="N6-succinyllysine; alternate" evidence="10">
    <location>
        <position position="473"/>
    </location>
</feature>
<feature type="modified residue" description="Phosphoserine" evidence="1">
    <location>
        <position position="477"/>
    </location>
</feature>
<feature type="mutagenesis site" description="Abolishes enzymatic activity." evidence="4">
    <original>K</original>
    <variation>E</variation>
    <location>
        <position position="83"/>
    </location>
</feature>
<feature type="mutagenesis site" description="Abolishes enzymatic activity." evidence="4">
    <original>K</original>
    <variation>E</variation>
    <location>
        <position position="310"/>
    </location>
</feature>
<feature type="sequence conflict" description="In Ref. 3; AAA92675." evidence="5" ref="3">
    <original>LSA</original>
    <variation>EFR</variation>
    <location>
        <begin position="29"/>
        <end position="31"/>
    </location>
</feature>
<feature type="sequence conflict" description="In Ref. 1; BAB23657." evidence="5" ref="1">
    <original>L</original>
    <variation>I</variation>
    <location>
        <position position="394"/>
    </location>
</feature>
<proteinExistence type="evidence at protein level"/>
<gene>
    <name type="primary">Hmgcs2</name>
</gene>
<protein>
    <recommendedName>
        <fullName>Hydroxymethylglutaryl-CoA synthase, mitochondrial</fullName>
        <shortName>HMG-CoA synthase</shortName>
        <ecNumber evidence="4">2.3.3.10</ecNumber>
    </recommendedName>
    <alternativeName>
        <fullName>3-hydroxy-3-methylglutaryl coenzyme A synthase</fullName>
    </alternativeName>
</protein>
<name>HMCS2_MOUSE</name>
<evidence type="ECO:0000250" key="1">
    <source>
        <dbReference type="UniProtKB" id="P22791"/>
    </source>
</evidence>
<evidence type="ECO:0000250" key="2">
    <source>
        <dbReference type="UniProtKB" id="P54868"/>
    </source>
</evidence>
<evidence type="ECO:0000255" key="3">
    <source>
        <dbReference type="PROSITE-ProRule" id="PRU10116"/>
    </source>
</evidence>
<evidence type="ECO:0000269" key="4">
    <source>
    </source>
</evidence>
<evidence type="ECO:0000305" key="5"/>
<evidence type="ECO:0000305" key="6">
    <source>
    </source>
</evidence>
<evidence type="ECO:0007744" key="7">
    <source>
    </source>
</evidence>
<evidence type="ECO:0007744" key="8">
    <source>
    </source>
</evidence>
<evidence type="ECO:0007744" key="9">
    <source>
    </source>
</evidence>
<evidence type="ECO:0007744" key="10">
    <source>
    </source>
</evidence>
<sequence>MQRLLAPARRVLQVKRAMQETSLTPAHLLSAAQQRFSTIPPAPLAKTDTWPKDVGILALEVYFPAQYVDQTDLEKFNNVEAGKYTVGLGQTRMGFCSVQEDINSLCLTVVQRLMERTKLPWDAVGRLEVGTETIIDKSKAVKTVLMELFQDSGNTDIEGIDTTNACYGGTASLFNAANWMESSYWDGRYALVVCGDIAVYPSGNARPTGGAGAVAMLIGPKAPLVLEQGLRGTHMENAYDFYKPNLASEYPLVDGKLSIQCYLRALDRCYAAYRKKIQNQWKQAGNNQPFTLDDVQYMIFHTPFCKMVQKSLARLMFNDFLSSSSDKQNNLYKGLEAFRGLKLEETYTNKDVDKALLKASLDMFNQKTKASLYLSTNNGNMYTSSLYGCLASLLSHHSAQELAGSRIGAFSYGSGLAASFFSFRVSKDASPGSPLEKLVSSVSDLPKRLDSRRRMSPEEFTEIMNQREQFYHKVNFSPPGDTSNLFPGTWYLERVDEMHRRKYARCPV</sequence>
<organism>
    <name type="scientific">Mus musculus</name>
    <name type="common">Mouse</name>
    <dbReference type="NCBI Taxonomy" id="10090"/>
    <lineage>
        <taxon>Eukaryota</taxon>
        <taxon>Metazoa</taxon>
        <taxon>Chordata</taxon>
        <taxon>Craniata</taxon>
        <taxon>Vertebrata</taxon>
        <taxon>Euteleostomi</taxon>
        <taxon>Mammalia</taxon>
        <taxon>Eutheria</taxon>
        <taxon>Euarchontoglires</taxon>
        <taxon>Glires</taxon>
        <taxon>Rodentia</taxon>
        <taxon>Myomorpha</taxon>
        <taxon>Muroidea</taxon>
        <taxon>Muridae</taxon>
        <taxon>Murinae</taxon>
        <taxon>Mus</taxon>
        <taxon>Mus</taxon>
    </lineage>
</organism>
<reference key="1">
    <citation type="journal article" date="2005" name="Science">
        <title>The transcriptional landscape of the mammalian genome.</title>
        <authorList>
            <person name="Carninci P."/>
            <person name="Kasukawa T."/>
            <person name="Katayama S."/>
            <person name="Gough J."/>
            <person name="Frith M.C."/>
            <person name="Maeda N."/>
            <person name="Oyama R."/>
            <person name="Ravasi T."/>
            <person name="Lenhard B."/>
            <person name="Wells C."/>
            <person name="Kodzius R."/>
            <person name="Shimokawa K."/>
            <person name="Bajic V.B."/>
            <person name="Brenner S.E."/>
            <person name="Batalov S."/>
            <person name="Forrest A.R."/>
            <person name="Zavolan M."/>
            <person name="Davis M.J."/>
            <person name="Wilming L.G."/>
            <person name="Aidinis V."/>
            <person name="Allen J.E."/>
            <person name="Ambesi-Impiombato A."/>
            <person name="Apweiler R."/>
            <person name="Aturaliya R.N."/>
            <person name="Bailey T.L."/>
            <person name="Bansal M."/>
            <person name="Baxter L."/>
            <person name="Beisel K.W."/>
            <person name="Bersano T."/>
            <person name="Bono H."/>
            <person name="Chalk A.M."/>
            <person name="Chiu K.P."/>
            <person name="Choudhary V."/>
            <person name="Christoffels A."/>
            <person name="Clutterbuck D.R."/>
            <person name="Crowe M.L."/>
            <person name="Dalla E."/>
            <person name="Dalrymple B.P."/>
            <person name="de Bono B."/>
            <person name="Della Gatta G."/>
            <person name="di Bernardo D."/>
            <person name="Down T."/>
            <person name="Engstrom P."/>
            <person name="Fagiolini M."/>
            <person name="Faulkner G."/>
            <person name="Fletcher C.F."/>
            <person name="Fukushima T."/>
            <person name="Furuno M."/>
            <person name="Futaki S."/>
            <person name="Gariboldi M."/>
            <person name="Georgii-Hemming P."/>
            <person name="Gingeras T.R."/>
            <person name="Gojobori T."/>
            <person name="Green R.E."/>
            <person name="Gustincich S."/>
            <person name="Harbers M."/>
            <person name="Hayashi Y."/>
            <person name="Hensch T.K."/>
            <person name="Hirokawa N."/>
            <person name="Hill D."/>
            <person name="Huminiecki L."/>
            <person name="Iacono M."/>
            <person name="Ikeo K."/>
            <person name="Iwama A."/>
            <person name="Ishikawa T."/>
            <person name="Jakt M."/>
            <person name="Kanapin A."/>
            <person name="Katoh M."/>
            <person name="Kawasawa Y."/>
            <person name="Kelso J."/>
            <person name="Kitamura H."/>
            <person name="Kitano H."/>
            <person name="Kollias G."/>
            <person name="Krishnan S.P."/>
            <person name="Kruger A."/>
            <person name="Kummerfeld S.K."/>
            <person name="Kurochkin I.V."/>
            <person name="Lareau L.F."/>
            <person name="Lazarevic D."/>
            <person name="Lipovich L."/>
            <person name="Liu J."/>
            <person name="Liuni S."/>
            <person name="McWilliam S."/>
            <person name="Madan Babu M."/>
            <person name="Madera M."/>
            <person name="Marchionni L."/>
            <person name="Matsuda H."/>
            <person name="Matsuzawa S."/>
            <person name="Miki H."/>
            <person name="Mignone F."/>
            <person name="Miyake S."/>
            <person name="Morris K."/>
            <person name="Mottagui-Tabar S."/>
            <person name="Mulder N."/>
            <person name="Nakano N."/>
            <person name="Nakauchi H."/>
            <person name="Ng P."/>
            <person name="Nilsson R."/>
            <person name="Nishiguchi S."/>
            <person name="Nishikawa S."/>
            <person name="Nori F."/>
            <person name="Ohara O."/>
            <person name="Okazaki Y."/>
            <person name="Orlando V."/>
            <person name="Pang K.C."/>
            <person name="Pavan W.J."/>
            <person name="Pavesi G."/>
            <person name="Pesole G."/>
            <person name="Petrovsky N."/>
            <person name="Piazza S."/>
            <person name="Reed J."/>
            <person name="Reid J.F."/>
            <person name="Ring B.Z."/>
            <person name="Ringwald M."/>
            <person name="Rost B."/>
            <person name="Ruan Y."/>
            <person name="Salzberg S.L."/>
            <person name="Sandelin A."/>
            <person name="Schneider C."/>
            <person name="Schoenbach C."/>
            <person name="Sekiguchi K."/>
            <person name="Semple C.A."/>
            <person name="Seno S."/>
            <person name="Sessa L."/>
            <person name="Sheng Y."/>
            <person name="Shibata Y."/>
            <person name="Shimada H."/>
            <person name="Shimada K."/>
            <person name="Silva D."/>
            <person name="Sinclair B."/>
            <person name="Sperling S."/>
            <person name="Stupka E."/>
            <person name="Sugiura K."/>
            <person name="Sultana R."/>
            <person name="Takenaka Y."/>
            <person name="Taki K."/>
            <person name="Tammoja K."/>
            <person name="Tan S.L."/>
            <person name="Tang S."/>
            <person name="Taylor M.S."/>
            <person name="Tegner J."/>
            <person name="Teichmann S.A."/>
            <person name="Ueda H.R."/>
            <person name="van Nimwegen E."/>
            <person name="Verardo R."/>
            <person name="Wei C.L."/>
            <person name="Yagi K."/>
            <person name="Yamanishi H."/>
            <person name="Zabarovsky E."/>
            <person name="Zhu S."/>
            <person name="Zimmer A."/>
            <person name="Hide W."/>
            <person name="Bult C."/>
            <person name="Grimmond S.M."/>
            <person name="Teasdale R.D."/>
            <person name="Liu E.T."/>
            <person name="Brusic V."/>
            <person name="Quackenbush J."/>
            <person name="Wahlestedt C."/>
            <person name="Mattick J.S."/>
            <person name="Hume D.A."/>
            <person name="Kai C."/>
            <person name="Sasaki D."/>
            <person name="Tomaru Y."/>
            <person name="Fukuda S."/>
            <person name="Kanamori-Katayama M."/>
            <person name="Suzuki M."/>
            <person name="Aoki J."/>
            <person name="Arakawa T."/>
            <person name="Iida J."/>
            <person name="Imamura K."/>
            <person name="Itoh M."/>
            <person name="Kato T."/>
            <person name="Kawaji H."/>
            <person name="Kawagashira N."/>
            <person name="Kawashima T."/>
            <person name="Kojima M."/>
            <person name="Kondo S."/>
            <person name="Konno H."/>
            <person name="Nakano K."/>
            <person name="Ninomiya N."/>
            <person name="Nishio T."/>
            <person name="Okada M."/>
            <person name="Plessy C."/>
            <person name="Shibata K."/>
            <person name="Shiraki T."/>
            <person name="Suzuki S."/>
            <person name="Tagami M."/>
            <person name="Waki K."/>
            <person name="Watahiki A."/>
            <person name="Okamura-Oho Y."/>
            <person name="Suzuki H."/>
            <person name="Kawai J."/>
            <person name="Hayashizaki Y."/>
        </authorList>
    </citation>
    <scope>NUCLEOTIDE SEQUENCE [LARGE SCALE MRNA]</scope>
    <source>
        <strain>C57BL/6J</strain>
        <tissue>Liver</tissue>
    </source>
</reference>
<reference key="2">
    <citation type="journal article" date="2004" name="Genome Res.">
        <title>The status, quality, and expansion of the NIH full-length cDNA project: the Mammalian Gene Collection (MGC).</title>
        <authorList>
            <consortium name="The MGC Project Team"/>
        </authorList>
    </citation>
    <scope>NUCLEOTIDE SEQUENCE [LARGE SCALE MRNA]</scope>
    <source>
        <strain>FVB/N</strain>
        <tissue>Colon</tissue>
        <tissue>Liver</tissue>
    </source>
</reference>
<reference key="3">
    <citation type="journal article" date="1994" name="Genomics">
        <title>Human mitochondrial HMG CoA synthase: liver cDNA and partial genomic cloning, chromosome mapping to 1p12-p13, and possible role in vertebrate evolution.</title>
        <authorList>
            <person name="Boukaftane Y."/>
            <person name="Duncan A."/>
            <person name="Wang S."/>
            <person name="Labuda D."/>
            <person name="Robert M.-F."/>
            <person name="Sarrazin J."/>
            <person name="Schappert K.T."/>
            <person name="Mitchell G.A."/>
        </authorList>
    </citation>
    <scope>NUCLEOTIDE SEQUENCE [GENOMIC DNA] OF 29-508</scope>
    <source>
        <strain>CHS</strain>
        <tissue>Liver</tissue>
    </source>
</reference>
<reference key="4">
    <citation type="journal article" date="2007" name="Mol. Cell. Proteomics">
        <title>Mitochondrial phosphoproteome revealed by an improved IMAC method and MS/MS/MS.</title>
        <authorList>
            <person name="Lee J."/>
            <person name="Xu Y."/>
            <person name="Chen Y."/>
            <person name="Sprung R."/>
            <person name="Kim S.C."/>
            <person name="Xie S."/>
            <person name="Zhao Y."/>
        </authorList>
    </citation>
    <scope>PHOSPHORYLATION [LARGE SCALE ANALYSIS] AT SER-433</scope>
    <scope>IDENTIFICATION BY MASS SPECTROMETRY [LARGE SCALE ANALYSIS]</scope>
    <source>
        <tissue>Liver</tissue>
    </source>
</reference>
<reference key="5">
    <citation type="journal article" date="2010" name="Cell">
        <title>A tissue-specific atlas of mouse protein phosphorylation and expression.</title>
        <authorList>
            <person name="Huttlin E.L."/>
            <person name="Jedrychowski M.P."/>
            <person name="Elias J.E."/>
            <person name="Goswami T."/>
            <person name="Rad R."/>
            <person name="Beausoleil S.A."/>
            <person name="Villen J."/>
            <person name="Haas W."/>
            <person name="Sowa M.E."/>
            <person name="Gygi S.P."/>
        </authorList>
    </citation>
    <scope>PHOSPHORYLATION [LARGE SCALE ANALYSIS] AT SER-456</scope>
    <scope>IDENTIFICATION BY MASS SPECTROMETRY [LARGE SCALE ANALYSIS]</scope>
    <source>
        <tissue>Heart</tissue>
        <tissue>Kidney</tissue>
        <tissue>Liver</tissue>
        <tissue>Lung</tissue>
        <tissue>Spleen</tissue>
        <tissue>Testis</tissue>
    </source>
</reference>
<reference key="6">
    <citation type="journal article" date="2013" name="Cell Metab.">
        <title>SIRT5 regulates the mitochondrial lysine succinylome and metabolic networks.</title>
        <authorList>
            <person name="Rardin M.J."/>
            <person name="He W."/>
            <person name="Nishida Y."/>
            <person name="Newman J.C."/>
            <person name="Carrico C."/>
            <person name="Danielson S.R."/>
            <person name="Guo A."/>
            <person name="Gut P."/>
            <person name="Sahu A.K."/>
            <person name="Li B."/>
            <person name="Uppala R."/>
            <person name="Fitch M."/>
            <person name="Riiff T."/>
            <person name="Zhu L."/>
            <person name="Zhou J."/>
            <person name="Mulhern D."/>
            <person name="Stevens R.D."/>
            <person name="Ilkayeva O.R."/>
            <person name="Newgard C.B."/>
            <person name="Jacobson M.P."/>
            <person name="Hellerstein M."/>
            <person name="Goetzman E.S."/>
            <person name="Gibson B.W."/>
            <person name="Verdin E."/>
        </authorList>
    </citation>
    <scope>FUNCTION</scope>
    <scope>SUCCINYLATION AT LYS-83; LYS-310; LYS-354 AND LYS-358</scope>
    <scope>MUTAGENESIS OF LYS-83 AND LYS-310</scope>
    <scope>BIOPHYSICOCHEMICAL PROPERTIES</scope>
    <scope>CATALYTIC ACTIVITY</scope>
</reference>
<reference key="7">
    <citation type="journal article" date="2013" name="Mol. Cell">
        <title>SIRT5-mediated lysine desuccinylation impacts diverse metabolic pathways.</title>
        <authorList>
            <person name="Park J."/>
            <person name="Chen Y."/>
            <person name="Tishkoff D.X."/>
            <person name="Peng C."/>
            <person name="Tan M."/>
            <person name="Dai L."/>
            <person name="Xie Z."/>
            <person name="Zhang Y."/>
            <person name="Zwaans B.M."/>
            <person name="Skinner M.E."/>
            <person name="Lombard D.B."/>
            <person name="Zhao Y."/>
        </authorList>
    </citation>
    <scope>SUCCINYLATION [LARGE SCALE ANALYSIS] AT LYS-52; LYS-83; LYS-118; LYS-221; LYS-256; LYS-310; LYS-327; LYS-333; LYS-342; LYS-350; LYS-354; LYS-358; LYS-447 AND LYS-473</scope>
    <scope>IDENTIFICATION BY MASS SPECTROMETRY [LARGE SCALE ANALYSIS]</scope>
    <source>
        <tissue>Liver</tissue>
    </source>
</reference>
<reference key="8">
    <citation type="journal article" date="2013" name="Proc. Natl. Acad. Sci. U.S.A.">
        <title>Label-free quantitative proteomics of the lysine acetylome in mitochondria identifies substrates of SIRT3 in metabolic pathways.</title>
        <authorList>
            <person name="Rardin M.J."/>
            <person name="Newman J.C."/>
            <person name="Held J.M."/>
            <person name="Cusack M.P."/>
            <person name="Sorensen D.J."/>
            <person name="Li B."/>
            <person name="Schilling B."/>
            <person name="Mooney S.D."/>
            <person name="Kahn C.R."/>
            <person name="Verdin E."/>
            <person name="Gibson B.W."/>
        </authorList>
    </citation>
    <scope>ACETYLATION [LARGE SCALE ANALYSIS] AT LYS-83; LYS-118; LYS-243; LYS-256; LYS-306; LYS-310; LYS-327; LYS-342; LYS-350; LYS-354; LYS-358; LYS-427; LYS-437; LYS-447 AND LYS-473</scope>
    <scope>IDENTIFICATION BY MASS SPECTROMETRY [LARGE SCALE ANALYSIS]</scope>
    <source>
        <tissue>Liver</tissue>
    </source>
</reference>
<accession>P54869</accession>
<accession>Q64740</accession>
<accession>Q9DBK1</accession>
<accession>Q9DBM4</accession>
<keyword id="KW-0007">Acetylation</keyword>
<keyword id="KW-0152">Cholesterol biosynthesis</keyword>
<keyword id="KW-0153">Cholesterol metabolism</keyword>
<keyword id="KW-0444">Lipid biosynthesis</keyword>
<keyword id="KW-0443">Lipid metabolism</keyword>
<keyword id="KW-0496">Mitochondrion</keyword>
<keyword id="KW-0597">Phosphoprotein</keyword>
<keyword id="KW-1185">Reference proteome</keyword>
<keyword id="KW-0752">Steroid biosynthesis</keyword>
<keyword id="KW-0753">Steroid metabolism</keyword>
<keyword id="KW-0756">Sterol biosynthesis</keyword>
<keyword id="KW-1207">Sterol metabolism</keyword>
<keyword id="KW-0808">Transferase</keyword>
<keyword id="KW-0809">Transit peptide</keyword>
<comment type="function">
    <text evidence="4">Catalyzes the first irreversible step in ketogenesis, condensing acetyl-CoA to acetoacetyl-CoA to form HMG-CoA, which is converted by HMG-CoA reductase (HMGCR) into mevalonate.</text>
</comment>
<comment type="catalytic activity">
    <reaction evidence="3 4">
        <text>acetoacetyl-CoA + acetyl-CoA + H2O = (3S)-3-hydroxy-3-methylglutaryl-CoA + CoA + H(+)</text>
        <dbReference type="Rhea" id="RHEA:10188"/>
        <dbReference type="ChEBI" id="CHEBI:15377"/>
        <dbReference type="ChEBI" id="CHEBI:15378"/>
        <dbReference type="ChEBI" id="CHEBI:43074"/>
        <dbReference type="ChEBI" id="CHEBI:57286"/>
        <dbReference type="ChEBI" id="CHEBI:57287"/>
        <dbReference type="ChEBI" id="CHEBI:57288"/>
        <dbReference type="EC" id="2.3.3.10"/>
    </reaction>
    <physiologicalReaction direction="left-to-right" evidence="6">
        <dbReference type="Rhea" id="RHEA:10189"/>
    </physiologicalReaction>
</comment>
<comment type="biophysicochemical properties">
    <kinetics>
        <KM evidence="4">460 uM for acetyl-CoA</KM>
        <Vmax evidence="4">59.0 nmol/min/mg enzyme with acetyl-CoA as a substrate</Vmax>
    </kinetics>
</comment>
<comment type="pathway">
    <text>Metabolic intermediate biosynthesis; (R)-mevalonate biosynthesis; (R)-mevalonate from acetyl-CoA: step 2/3.</text>
</comment>
<comment type="subunit">
    <text evidence="2">Homodimer.</text>
</comment>
<comment type="subcellular location">
    <subcellularLocation>
        <location evidence="1">Mitochondrion</location>
    </subcellularLocation>
</comment>
<comment type="tissue specificity">
    <text>Liver and kidney.</text>
</comment>
<comment type="PTM">
    <text>Acetylation of Lys-427 is observed in liver mitochondria from fasted mice but not from fed mice.</text>
</comment>
<comment type="PTM">
    <text evidence="4">Succinylated. Desuccinylated by SIRT5. Succinylation, at least at Lys-83 and Lys-310, inhibits the enzymatic activity.</text>
</comment>
<comment type="similarity">
    <text evidence="5">Belongs to the thiolase-like superfamily. HMG-CoA synthase family.</text>
</comment>
<dbReference type="EC" id="2.3.3.10" evidence="4"/>
<dbReference type="EMBL" id="AK004865">
    <property type="protein sequence ID" value="BAB23626.1"/>
    <property type="molecule type" value="mRNA"/>
</dbReference>
<dbReference type="EMBL" id="AK004902">
    <property type="protein sequence ID" value="BAB23657.1"/>
    <property type="molecule type" value="mRNA"/>
</dbReference>
<dbReference type="EMBL" id="BC014714">
    <property type="protein sequence ID" value="AAH14714.1"/>
    <property type="molecule type" value="mRNA"/>
</dbReference>
<dbReference type="EMBL" id="BC024744">
    <property type="protein sequence ID" value="AAH24744.1"/>
    <property type="molecule type" value="mRNA"/>
</dbReference>
<dbReference type="EMBL" id="U12790">
    <property type="protein sequence ID" value="AAA92675.1"/>
    <property type="molecule type" value="Genomic_DNA"/>
</dbReference>
<dbReference type="EMBL" id="U12791">
    <property type="protein sequence ID" value="AAA92676.1"/>
    <property type="molecule type" value="Genomic_DNA"/>
</dbReference>
<dbReference type="CCDS" id="CCDS17662.1"/>
<dbReference type="PIR" id="B55729">
    <property type="entry name" value="B55729"/>
</dbReference>
<dbReference type="RefSeq" id="NP_032282.2">
    <property type="nucleotide sequence ID" value="NM_008256.4"/>
</dbReference>
<dbReference type="SMR" id="P54869"/>
<dbReference type="BioGRID" id="200339">
    <property type="interactions" value="4"/>
</dbReference>
<dbReference type="FunCoup" id="P54869">
    <property type="interactions" value="1170"/>
</dbReference>
<dbReference type="STRING" id="10090.ENSMUSP00000088249"/>
<dbReference type="GlyGen" id="P54869">
    <property type="glycosylation" value="2 sites, 1 O-linked glycan (2 sites)"/>
</dbReference>
<dbReference type="iPTMnet" id="P54869"/>
<dbReference type="PhosphoSitePlus" id="P54869"/>
<dbReference type="SwissPalm" id="P54869"/>
<dbReference type="REPRODUCTION-2DPAGE" id="P54869"/>
<dbReference type="jPOST" id="P54869"/>
<dbReference type="PaxDb" id="10090-ENSMUSP00000088249"/>
<dbReference type="PeptideAtlas" id="P54869"/>
<dbReference type="ProteomicsDB" id="273365"/>
<dbReference type="Antibodypedia" id="33918">
    <property type="antibodies" value="201 antibodies from 26 providers"/>
</dbReference>
<dbReference type="DNASU" id="15360"/>
<dbReference type="Ensembl" id="ENSMUST00000090746.3">
    <property type="protein sequence ID" value="ENSMUSP00000088249.3"/>
    <property type="gene ID" value="ENSMUSG00000027875.13"/>
</dbReference>
<dbReference type="Ensembl" id="ENSMUST00000120541.8">
    <property type="protein sequence ID" value="ENSMUSP00000113296.2"/>
    <property type="gene ID" value="ENSMUSG00000027875.13"/>
</dbReference>
<dbReference type="GeneID" id="15360"/>
<dbReference type="KEGG" id="mmu:15360"/>
<dbReference type="UCSC" id="uc008qpr.2">
    <property type="organism name" value="mouse"/>
</dbReference>
<dbReference type="AGR" id="MGI:101939"/>
<dbReference type="CTD" id="3158"/>
<dbReference type="MGI" id="MGI:101939">
    <property type="gene designation" value="Hmgcs2"/>
</dbReference>
<dbReference type="VEuPathDB" id="HostDB:ENSMUSG00000027875"/>
<dbReference type="eggNOG" id="KOG1393">
    <property type="taxonomic scope" value="Eukaryota"/>
</dbReference>
<dbReference type="GeneTree" id="ENSGT00390000006096"/>
<dbReference type="HOGENOM" id="CLU_008065_0_1_1"/>
<dbReference type="InParanoid" id="P54869"/>
<dbReference type="OMA" id="ARNGNMY"/>
<dbReference type="OrthoDB" id="1269963at2759"/>
<dbReference type="PhylomeDB" id="P54869"/>
<dbReference type="TreeFam" id="TF105361"/>
<dbReference type="BRENDA" id="2.3.3.10">
    <property type="organism ID" value="3474"/>
</dbReference>
<dbReference type="Reactome" id="R-MMU-77111">
    <property type="pathway name" value="Synthesis of Ketone Bodies"/>
</dbReference>
<dbReference type="Reactome" id="R-MMU-9837999">
    <property type="pathway name" value="Mitochondrial protein degradation"/>
</dbReference>
<dbReference type="SABIO-RK" id="P54869"/>
<dbReference type="UniPathway" id="UPA00058">
    <property type="reaction ID" value="UER00102"/>
</dbReference>
<dbReference type="BioGRID-ORCS" id="15360">
    <property type="hits" value="4 hits in 81 CRISPR screens"/>
</dbReference>
<dbReference type="ChiTaRS" id="Hmgcs2">
    <property type="organism name" value="mouse"/>
</dbReference>
<dbReference type="PRO" id="PR:P54869"/>
<dbReference type="Proteomes" id="UP000000589">
    <property type="component" value="Chromosome 3"/>
</dbReference>
<dbReference type="RNAct" id="P54869">
    <property type="molecule type" value="protein"/>
</dbReference>
<dbReference type="Bgee" id="ENSMUSG00000027875">
    <property type="expression patterns" value="Expressed in right colon and 197 other cell types or tissues"/>
</dbReference>
<dbReference type="GO" id="GO:0005743">
    <property type="term" value="C:mitochondrial inner membrane"/>
    <property type="evidence" value="ECO:0007005"/>
    <property type="project" value="MGI"/>
</dbReference>
<dbReference type="GO" id="GO:0005759">
    <property type="term" value="C:mitochondrial matrix"/>
    <property type="evidence" value="ECO:0007669"/>
    <property type="project" value="Ensembl"/>
</dbReference>
<dbReference type="GO" id="GO:0005739">
    <property type="term" value="C:mitochondrion"/>
    <property type="evidence" value="ECO:0000314"/>
    <property type="project" value="MGI"/>
</dbReference>
<dbReference type="GO" id="GO:0004421">
    <property type="term" value="F:hydroxymethylglutaryl-CoA synthase activity"/>
    <property type="evidence" value="ECO:0000314"/>
    <property type="project" value="UniProtKB"/>
</dbReference>
<dbReference type="GO" id="GO:0042802">
    <property type="term" value="F:identical protein binding"/>
    <property type="evidence" value="ECO:0000250"/>
    <property type="project" value="UniProtKB"/>
</dbReference>
<dbReference type="GO" id="GO:0006084">
    <property type="term" value="P:acetyl-CoA metabolic process"/>
    <property type="evidence" value="ECO:0007669"/>
    <property type="project" value="Ensembl"/>
</dbReference>
<dbReference type="GO" id="GO:0060612">
    <property type="term" value="P:adipose tissue development"/>
    <property type="evidence" value="ECO:0007669"/>
    <property type="project" value="Ensembl"/>
</dbReference>
<dbReference type="GO" id="GO:0071230">
    <property type="term" value="P:cellular response to amino acid stimulus"/>
    <property type="evidence" value="ECO:0007669"/>
    <property type="project" value="Ensembl"/>
</dbReference>
<dbReference type="GO" id="GO:0071398">
    <property type="term" value="P:cellular response to fatty acid"/>
    <property type="evidence" value="ECO:0007669"/>
    <property type="project" value="Ensembl"/>
</dbReference>
<dbReference type="GO" id="GO:0071385">
    <property type="term" value="P:cellular response to glucocorticoid stimulus"/>
    <property type="evidence" value="ECO:0007669"/>
    <property type="project" value="Ensembl"/>
</dbReference>
<dbReference type="GO" id="GO:0032869">
    <property type="term" value="P:cellular response to insulin stimulus"/>
    <property type="evidence" value="ECO:0007669"/>
    <property type="project" value="Ensembl"/>
</dbReference>
<dbReference type="GO" id="GO:0071222">
    <property type="term" value="P:cellular response to lipopolysaccharide"/>
    <property type="evidence" value="ECO:0007669"/>
    <property type="project" value="Ensembl"/>
</dbReference>
<dbReference type="GO" id="GO:0006695">
    <property type="term" value="P:cholesterol biosynthetic process"/>
    <property type="evidence" value="ECO:0007669"/>
    <property type="project" value="UniProtKB-KW"/>
</dbReference>
<dbReference type="GO" id="GO:0010142">
    <property type="term" value="P:farnesyl diphosphate biosynthetic process, mevalonate pathway"/>
    <property type="evidence" value="ECO:0007669"/>
    <property type="project" value="InterPro"/>
</dbReference>
<dbReference type="GO" id="GO:0046951">
    <property type="term" value="P:ketone body biosynthetic process"/>
    <property type="evidence" value="ECO:0007669"/>
    <property type="project" value="Ensembl"/>
</dbReference>
<dbReference type="GO" id="GO:0001822">
    <property type="term" value="P:kidney development"/>
    <property type="evidence" value="ECO:0007669"/>
    <property type="project" value="Ensembl"/>
</dbReference>
<dbReference type="GO" id="GO:0001889">
    <property type="term" value="P:liver development"/>
    <property type="evidence" value="ECO:0007669"/>
    <property type="project" value="Ensembl"/>
</dbReference>
<dbReference type="GO" id="GO:0030324">
    <property type="term" value="P:lung development"/>
    <property type="evidence" value="ECO:0007669"/>
    <property type="project" value="Ensembl"/>
</dbReference>
<dbReference type="GO" id="GO:0007494">
    <property type="term" value="P:midgut development"/>
    <property type="evidence" value="ECO:0007669"/>
    <property type="project" value="Ensembl"/>
</dbReference>
<dbReference type="GO" id="GO:0033555">
    <property type="term" value="P:multicellular organismal response to stress"/>
    <property type="evidence" value="ECO:0007669"/>
    <property type="project" value="Ensembl"/>
</dbReference>
<dbReference type="GO" id="GO:0051591">
    <property type="term" value="P:response to cAMP"/>
    <property type="evidence" value="ECO:0007669"/>
    <property type="project" value="Ensembl"/>
</dbReference>
<dbReference type="GO" id="GO:0045471">
    <property type="term" value="P:response to ethanol"/>
    <property type="evidence" value="ECO:0007669"/>
    <property type="project" value="Ensembl"/>
</dbReference>
<dbReference type="GO" id="GO:0033762">
    <property type="term" value="P:response to glucagon"/>
    <property type="evidence" value="ECO:0007669"/>
    <property type="project" value="Ensembl"/>
</dbReference>
<dbReference type="GO" id="GO:0060416">
    <property type="term" value="P:response to growth hormone"/>
    <property type="evidence" value="ECO:0007669"/>
    <property type="project" value="Ensembl"/>
</dbReference>
<dbReference type="GO" id="GO:0070543">
    <property type="term" value="P:response to linoleic acid"/>
    <property type="evidence" value="ECO:0007669"/>
    <property type="project" value="Ensembl"/>
</dbReference>
<dbReference type="GO" id="GO:0010038">
    <property type="term" value="P:response to metal ion"/>
    <property type="evidence" value="ECO:0007669"/>
    <property type="project" value="Ensembl"/>
</dbReference>
<dbReference type="GO" id="GO:0034284">
    <property type="term" value="P:response to monosaccharide"/>
    <property type="evidence" value="ECO:0007669"/>
    <property type="project" value="Ensembl"/>
</dbReference>
<dbReference type="GO" id="GO:0007584">
    <property type="term" value="P:response to nutrient"/>
    <property type="evidence" value="ECO:0007669"/>
    <property type="project" value="Ensembl"/>
</dbReference>
<dbReference type="GO" id="GO:0034696">
    <property type="term" value="P:response to prostaglandin F"/>
    <property type="evidence" value="ECO:0007669"/>
    <property type="project" value="Ensembl"/>
</dbReference>
<dbReference type="GO" id="GO:0042594">
    <property type="term" value="P:response to starvation"/>
    <property type="evidence" value="ECO:0007669"/>
    <property type="project" value="Ensembl"/>
</dbReference>
<dbReference type="GO" id="GO:0009266">
    <property type="term" value="P:response to temperature stimulus"/>
    <property type="evidence" value="ECO:0007669"/>
    <property type="project" value="Ensembl"/>
</dbReference>
<dbReference type="GO" id="GO:0033574">
    <property type="term" value="P:response to testosterone"/>
    <property type="evidence" value="ECO:0007669"/>
    <property type="project" value="Ensembl"/>
</dbReference>
<dbReference type="GO" id="GO:0034014">
    <property type="term" value="P:response to triglyceride"/>
    <property type="evidence" value="ECO:0007669"/>
    <property type="project" value="Ensembl"/>
</dbReference>
<dbReference type="GO" id="GO:0009410">
    <property type="term" value="P:response to xenobiotic stimulus"/>
    <property type="evidence" value="ECO:0007669"/>
    <property type="project" value="Ensembl"/>
</dbReference>
<dbReference type="CDD" id="cd00827">
    <property type="entry name" value="init_cond_enzymes"/>
    <property type="match status" value="1"/>
</dbReference>
<dbReference type="FunFam" id="3.40.47.10:FF:000008">
    <property type="entry name" value="3-hydroxy-3-methylglutaryl coenzyme A synthase"/>
    <property type="match status" value="1"/>
</dbReference>
<dbReference type="Gene3D" id="3.40.47.10">
    <property type="match status" value="1"/>
</dbReference>
<dbReference type="InterPro" id="IPR000590">
    <property type="entry name" value="HMG_CoA_synt_AS"/>
</dbReference>
<dbReference type="InterPro" id="IPR013746">
    <property type="entry name" value="HMG_CoA_synt_C_dom"/>
</dbReference>
<dbReference type="InterPro" id="IPR013528">
    <property type="entry name" value="HMG_CoA_synth_N"/>
</dbReference>
<dbReference type="InterPro" id="IPR010122">
    <property type="entry name" value="HMG_CoA_synthase_euk"/>
</dbReference>
<dbReference type="InterPro" id="IPR016039">
    <property type="entry name" value="Thiolase-like"/>
</dbReference>
<dbReference type="NCBIfam" id="TIGR01833">
    <property type="entry name" value="HMG-CoA-S_euk"/>
    <property type="match status" value="1"/>
</dbReference>
<dbReference type="PANTHER" id="PTHR43323">
    <property type="entry name" value="3-HYDROXY-3-METHYLGLUTARYL COENZYME A SYNTHASE"/>
    <property type="match status" value="1"/>
</dbReference>
<dbReference type="PANTHER" id="PTHR43323:SF1">
    <property type="entry name" value="HYDROXYMETHYLGLUTARYL-COA SYNTHASE, MITOCHONDRIAL"/>
    <property type="match status" value="1"/>
</dbReference>
<dbReference type="Pfam" id="PF08540">
    <property type="entry name" value="HMG_CoA_synt_C"/>
    <property type="match status" value="1"/>
</dbReference>
<dbReference type="Pfam" id="PF01154">
    <property type="entry name" value="HMG_CoA_synt_N"/>
    <property type="match status" value="1"/>
</dbReference>
<dbReference type="SUPFAM" id="SSF53901">
    <property type="entry name" value="Thiolase-like"/>
    <property type="match status" value="2"/>
</dbReference>
<dbReference type="PROSITE" id="PS01226">
    <property type="entry name" value="HMG_COA_SYNTHASE"/>
    <property type="match status" value="1"/>
</dbReference>